<name>NU1C_PROM0</name>
<evidence type="ECO:0000255" key="1">
    <source>
        <dbReference type="HAMAP-Rule" id="MF_01350"/>
    </source>
</evidence>
<sequence>MEYGLDLEYSFNEFLKGFGLSSEIAHIIWLPLPMLLVLVAAVVGVLVTVWLERKISAAAQQRIGPEYAGALGVLQPIADGLKLLVKEDIIPAKADGILFTAGPILVLVPVILSWLIVPFGQNLLISNVGIGIFLWIALSSIQPIGLLMSGYASNNKYSLLGGLRAAAQSISYEIPLALSVLAIVLMTNSLSTIDIVNQQSGAGILSWNIWRQPVGFIVFWICALAECERLPFDLPEAEEELVAGYQTEYAGMKFALFYLGSYINLILSALLVSILYLGGWGFPIPVELIAKFLNLPINAPLIQVFTASIGIVMTVLKAYLLVFIAILLRWTTPRVRIDQLLDLGWKFLLPISLANLLITAGLKLAFPQFFGG</sequence>
<feature type="chain" id="PRO_0000298839" description="NAD(P)H-quinone oxidoreductase subunit 1">
    <location>
        <begin position="1"/>
        <end position="372"/>
    </location>
</feature>
<feature type="transmembrane region" description="Helical" evidence="1">
    <location>
        <begin position="27"/>
        <end position="47"/>
    </location>
</feature>
<feature type="transmembrane region" description="Helical" evidence="1">
    <location>
        <begin position="97"/>
        <end position="117"/>
    </location>
</feature>
<feature type="transmembrane region" description="Helical" evidence="1">
    <location>
        <begin position="128"/>
        <end position="148"/>
    </location>
</feature>
<feature type="transmembrane region" description="Helical" evidence="1">
    <location>
        <begin position="176"/>
        <end position="196"/>
    </location>
</feature>
<feature type="transmembrane region" description="Helical" evidence="1">
    <location>
        <begin position="204"/>
        <end position="224"/>
    </location>
</feature>
<feature type="transmembrane region" description="Helical" evidence="1">
    <location>
        <begin position="266"/>
        <end position="286"/>
    </location>
</feature>
<feature type="transmembrane region" description="Helical" evidence="1">
    <location>
        <begin position="308"/>
        <end position="328"/>
    </location>
</feature>
<feature type="transmembrane region" description="Helical" evidence="1">
    <location>
        <begin position="347"/>
        <end position="367"/>
    </location>
</feature>
<protein>
    <recommendedName>
        <fullName evidence="1">NAD(P)H-quinone oxidoreductase subunit 1</fullName>
        <ecNumber evidence="1">7.1.1.-</ecNumber>
    </recommendedName>
    <alternativeName>
        <fullName evidence="1">NAD(P)H dehydrogenase I subunit 1</fullName>
    </alternativeName>
    <alternativeName>
        <fullName evidence="1">NDH-1 subunit 1</fullName>
    </alternativeName>
    <alternativeName>
        <fullName evidence="1">NDH-A</fullName>
    </alternativeName>
</protein>
<accession>A3PAM8</accession>
<comment type="function">
    <text evidence="1">NDH-1 shuttles electrons from an unknown electron donor, via FMN and iron-sulfur (Fe-S) centers, to quinones in the respiratory and/or the photosynthetic chain. The immediate electron acceptor for the enzyme in this species is believed to be plastoquinone. Couples the redox reaction to proton translocation, and thus conserves the redox energy in a proton gradient.</text>
</comment>
<comment type="catalytic activity">
    <reaction evidence="1">
        <text>a plastoquinone + NADH + (n+1) H(+)(in) = a plastoquinol + NAD(+) + n H(+)(out)</text>
        <dbReference type="Rhea" id="RHEA:42608"/>
        <dbReference type="Rhea" id="RHEA-COMP:9561"/>
        <dbReference type="Rhea" id="RHEA-COMP:9562"/>
        <dbReference type="ChEBI" id="CHEBI:15378"/>
        <dbReference type="ChEBI" id="CHEBI:17757"/>
        <dbReference type="ChEBI" id="CHEBI:57540"/>
        <dbReference type="ChEBI" id="CHEBI:57945"/>
        <dbReference type="ChEBI" id="CHEBI:62192"/>
    </reaction>
</comment>
<comment type="catalytic activity">
    <reaction evidence="1">
        <text>a plastoquinone + NADPH + (n+1) H(+)(in) = a plastoquinol + NADP(+) + n H(+)(out)</text>
        <dbReference type="Rhea" id="RHEA:42612"/>
        <dbReference type="Rhea" id="RHEA-COMP:9561"/>
        <dbReference type="Rhea" id="RHEA-COMP:9562"/>
        <dbReference type="ChEBI" id="CHEBI:15378"/>
        <dbReference type="ChEBI" id="CHEBI:17757"/>
        <dbReference type="ChEBI" id="CHEBI:57783"/>
        <dbReference type="ChEBI" id="CHEBI:58349"/>
        <dbReference type="ChEBI" id="CHEBI:62192"/>
    </reaction>
</comment>
<comment type="subunit">
    <text evidence="1">NDH-1 is composed of at least 11 different subunits.</text>
</comment>
<comment type="subcellular location">
    <subcellularLocation>
        <location evidence="1">Cellular thylakoid membrane</location>
        <topology evidence="1">Multi-pass membrane protein</topology>
    </subcellularLocation>
</comment>
<comment type="similarity">
    <text evidence="1">Belongs to the complex I subunit 1 family.</text>
</comment>
<dbReference type="EC" id="7.1.1.-" evidence="1"/>
<dbReference type="EMBL" id="CP000576">
    <property type="protein sequence ID" value="ABO16803.1"/>
    <property type="molecule type" value="Genomic_DNA"/>
</dbReference>
<dbReference type="SMR" id="A3PAM8"/>
<dbReference type="STRING" id="167546.P9301_01801"/>
<dbReference type="KEGG" id="pmg:P9301_01801"/>
<dbReference type="eggNOG" id="COG1005">
    <property type="taxonomic scope" value="Bacteria"/>
</dbReference>
<dbReference type="HOGENOM" id="CLU_015134_0_1_3"/>
<dbReference type="OrthoDB" id="9803734at2"/>
<dbReference type="Proteomes" id="UP000001430">
    <property type="component" value="Chromosome"/>
</dbReference>
<dbReference type="GO" id="GO:0031676">
    <property type="term" value="C:plasma membrane-derived thylakoid membrane"/>
    <property type="evidence" value="ECO:0007669"/>
    <property type="project" value="UniProtKB-SubCell"/>
</dbReference>
<dbReference type="GO" id="GO:0003954">
    <property type="term" value="F:NADH dehydrogenase activity"/>
    <property type="evidence" value="ECO:0007669"/>
    <property type="project" value="TreeGrafter"/>
</dbReference>
<dbReference type="GO" id="GO:0016655">
    <property type="term" value="F:oxidoreductase activity, acting on NAD(P)H, quinone or similar compound as acceptor"/>
    <property type="evidence" value="ECO:0007669"/>
    <property type="project" value="UniProtKB-UniRule"/>
</dbReference>
<dbReference type="GO" id="GO:0048038">
    <property type="term" value="F:quinone binding"/>
    <property type="evidence" value="ECO:0007669"/>
    <property type="project" value="UniProtKB-KW"/>
</dbReference>
<dbReference type="GO" id="GO:0009060">
    <property type="term" value="P:aerobic respiration"/>
    <property type="evidence" value="ECO:0007669"/>
    <property type="project" value="TreeGrafter"/>
</dbReference>
<dbReference type="GO" id="GO:0019684">
    <property type="term" value="P:photosynthesis, light reaction"/>
    <property type="evidence" value="ECO:0007669"/>
    <property type="project" value="UniProtKB-UniRule"/>
</dbReference>
<dbReference type="HAMAP" id="MF_01350">
    <property type="entry name" value="NDH1_NuoH"/>
    <property type="match status" value="1"/>
</dbReference>
<dbReference type="InterPro" id="IPR001694">
    <property type="entry name" value="NADH_UbQ_OxRdtase_su1/FPO"/>
</dbReference>
<dbReference type="InterPro" id="IPR018086">
    <property type="entry name" value="NADH_UbQ_OxRdtase_su1_CS"/>
</dbReference>
<dbReference type="NCBIfam" id="NF004741">
    <property type="entry name" value="PRK06076.1-2"/>
    <property type="match status" value="1"/>
</dbReference>
<dbReference type="NCBIfam" id="NF004744">
    <property type="entry name" value="PRK06076.1-5"/>
    <property type="match status" value="1"/>
</dbReference>
<dbReference type="PANTHER" id="PTHR11432">
    <property type="entry name" value="NADH DEHYDROGENASE SUBUNIT 1"/>
    <property type="match status" value="1"/>
</dbReference>
<dbReference type="PANTHER" id="PTHR11432:SF3">
    <property type="entry name" value="NADH-UBIQUINONE OXIDOREDUCTASE CHAIN 1"/>
    <property type="match status" value="1"/>
</dbReference>
<dbReference type="Pfam" id="PF00146">
    <property type="entry name" value="NADHdh"/>
    <property type="match status" value="1"/>
</dbReference>
<dbReference type="PROSITE" id="PS00667">
    <property type="entry name" value="COMPLEX1_ND1_1"/>
    <property type="match status" value="1"/>
</dbReference>
<dbReference type="PROSITE" id="PS00668">
    <property type="entry name" value="COMPLEX1_ND1_2"/>
    <property type="match status" value="1"/>
</dbReference>
<gene>
    <name evidence="1" type="primary">ndhA</name>
    <name type="ordered locus">P9301_01801</name>
</gene>
<keyword id="KW-0472">Membrane</keyword>
<keyword id="KW-0520">NAD</keyword>
<keyword id="KW-0521">NADP</keyword>
<keyword id="KW-0618">Plastoquinone</keyword>
<keyword id="KW-0874">Quinone</keyword>
<keyword id="KW-1185">Reference proteome</keyword>
<keyword id="KW-0793">Thylakoid</keyword>
<keyword id="KW-1278">Translocase</keyword>
<keyword id="KW-0812">Transmembrane</keyword>
<keyword id="KW-1133">Transmembrane helix</keyword>
<reference key="1">
    <citation type="journal article" date="2007" name="PLoS Genet.">
        <title>Patterns and implications of gene gain and loss in the evolution of Prochlorococcus.</title>
        <authorList>
            <person name="Kettler G.C."/>
            <person name="Martiny A.C."/>
            <person name="Huang K."/>
            <person name="Zucker J."/>
            <person name="Coleman M.L."/>
            <person name="Rodrigue S."/>
            <person name="Chen F."/>
            <person name="Lapidus A."/>
            <person name="Ferriera S."/>
            <person name="Johnson J."/>
            <person name="Steglich C."/>
            <person name="Church G.M."/>
            <person name="Richardson P."/>
            <person name="Chisholm S.W."/>
        </authorList>
    </citation>
    <scope>NUCLEOTIDE SEQUENCE [LARGE SCALE GENOMIC DNA]</scope>
    <source>
        <strain>MIT 9301</strain>
    </source>
</reference>
<proteinExistence type="inferred from homology"/>
<organism>
    <name type="scientific">Prochlorococcus marinus (strain MIT 9301)</name>
    <dbReference type="NCBI Taxonomy" id="167546"/>
    <lineage>
        <taxon>Bacteria</taxon>
        <taxon>Bacillati</taxon>
        <taxon>Cyanobacteriota</taxon>
        <taxon>Cyanophyceae</taxon>
        <taxon>Synechococcales</taxon>
        <taxon>Prochlorococcaceae</taxon>
        <taxon>Prochlorococcus</taxon>
    </lineage>
</organism>